<gene>
    <name evidence="2" type="primary">maiA</name>
</gene>
<keyword id="KW-0413">Isomerase</keyword>
<proteinExistence type="evidence at protein level"/>
<reference key="1">
    <citation type="journal article" date="1997" name="Biochem. Biophys. Res. Commun.">
        <title>Gene cloning and characterization of maleate cis-trans isomerase from Alcaligenes faecalis.</title>
        <authorList>
            <person name="Hatakeyama K."/>
            <person name="Asai Y."/>
            <person name="Uchida Y."/>
            <person name="Kobayashi M."/>
            <person name="Terasawa M."/>
            <person name="Yukawa H."/>
        </authorList>
    </citation>
    <scope>NUCLEOTIDE SEQUENCE [GENOMIC DNA]</scope>
    <scope>FUNCTION</scope>
    <scope>CATALYTIC ACTIVITY</scope>
    <scope>SUBUNIT</scope>
    <scope>BIOPHYSICOCHEMICAL PROPERTIES</scope>
    <source>
        <strain>ATCC 8750 / DSM 30030 / CCUG 1814 / LMG 1229 / NBRC 13111 / NCIMB 8156 / NCTC 11953 / Conn 16</strain>
    </source>
</reference>
<reference key="2">
    <citation type="journal article" date="2000" name="Biosci. Biotechnol. Biochem.">
        <title>Molecular analysis of maleate cis-trans isomerase from thermophilic bacteria.</title>
        <authorList>
            <person name="Hatakeyama K."/>
            <person name="Goto M."/>
            <person name="Uchida Y."/>
            <person name="Kobayashi M."/>
            <person name="Terasawa M."/>
            <person name="Yukawa H."/>
        </authorList>
    </citation>
    <scope>MUTAGENESIS OF CYS-64; CYS-80 AND CYS-198</scope>
</reference>
<name>MAIA_ALCFA</name>
<organism>
    <name type="scientific">Alcaligenes faecalis</name>
    <dbReference type="NCBI Taxonomy" id="511"/>
    <lineage>
        <taxon>Bacteria</taxon>
        <taxon>Pseudomonadati</taxon>
        <taxon>Pseudomonadota</taxon>
        <taxon>Betaproteobacteria</taxon>
        <taxon>Burkholderiales</taxon>
        <taxon>Alcaligenaceae</taxon>
        <taxon>Alcaligenes</taxon>
    </lineage>
</organism>
<evidence type="ECO:0000250" key="1">
    <source>
        <dbReference type="UniProtKB" id="Q5YXQ1"/>
    </source>
</evidence>
<evidence type="ECO:0000255" key="2">
    <source>
        <dbReference type="HAMAP-Rule" id="MF_00943"/>
    </source>
</evidence>
<evidence type="ECO:0000269" key="3">
    <source>
    </source>
</evidence>
<evidence type="ECO:0000269" key="4">
    <source>
    </source>
</evidence>
<sequence length="253" mass="27971">MKTYRIGQIVPSSNTTMETEIPAMLQARYAEFPEERFTFHSSRMRMMHVNPEELKAMDIASDRCAVELSDARMSVMAYACLVAIMAQGDGYHRVSQARLQNTVKENGVEIPVLSSAGALVDTLKEFGYKKVSIITPYMKPLTKRVADYIEAEGIEVQDSISLEVSDNLEVGLLNPENLLEHVKRLNHDGVDAVILSACVQMPSLPAIQRAQDQIGKPVLSAAVWTVYQMLKNLGLETRVPNAGHILSGVKPQA</sequence>
<dbReference type="EC" id="5.2.1.1" evidence="2"/>
<dbReference type="EMBL" id="AB005051">
    <property type="protein sequence ID" value="BAA23002.1"/>
    <property type="molecule type" value="Genomic_DNA"/>
</dbReference>
<dbReference type="PIR" id="JC5709">
    <property type="entry name" value="JC5709"/>
</dbReference>
<dbReference type="SMR" id="O24766"/>
<dbReference type="STRING" id="511.UZ73_12950"/>
<dbReference type="eggNOG" id="COG3473">
    <property type="taxonomic scope" value="Bacteria"/>
</dbReference>
<dbReference type="BioCyc" id="MetaCyc:MONOMER-20942"/>
<dbReference type="SABIO-RK" id="O24766"/>
<dbReference type="GO" id="GO:0050076">
    <property type="term" value="F:maleate isomerase activity"/>
    <property type="evidence" value="ECO:0000314"/>
    <property type="project" value="UniProtKB"/>
</dbReference>
<dbReference type="GO" id="GO:0051289">
    <property type="term" value="P:protein homotetramerization"/>
    <property type="evidence" value="ECO:0000314"/>
    <property type="project" value="UniProtKB"/>
</dbReference>
<dbReference type="FunFam" id="3.40.50.12500:FF:000002">
    <property type="entry name" value="Maleate isomerase"/>
    <property type="match status" value="1"/>
</dbReference>
<dbReference type="Gene3D" id="3.40.50.12500">
    <property type="match status" value="1"/>
</dbReference>
<dbReference type="HAMAP" id="MF_00943">
    <property type="entry name" value="Maleate_isomerase"/>
    <property type="match status" value="1"/>
</dbReference>
<dbReference type="InterPro" id="IPR053714">
    <property type="entry name" value="Iso_Racemase_Enz_sf"/>
</dbReference>
<dbReference type="InterPro" id="IPR026286">
    <property type="entry name" value="MaiA/AMDase"/>
</dbReference>
<dbReference type="InterPro" id="IPR028615">
    <property type="entry name" value="Maleate_isomerase"/>
</dbReference>
<dbReference type="PANTHER" id="PTHR40267">
    <property type="entry name" value="BLR3294 PROTEIN"/>
    <property type="match status" value="1"/>
</dbReference>
<dbReference type="PANTHER" id="PTHR40267:SF1">
    <property type="entry name" value="BLR3294 PROTEIN"/>
    <property type="match status" value="1"/>
</dbReference>
<dbReference type="Pfam" id="PF17645">
    <property type="entry name" value="Amdase"/>
    <property type="match status" value="1"/>
</dbReference>
<dbReference type="PIRSF" id="PIRSF015736">
    <property type="entry name" value="MI"/>
    <property type="match status" value="1"/>
</dbReference>
<protein>
    <recommendedName>
        <fullName evidence="2">Maleate isomerase</fullName>
        <ecNumber evidence="2">5.2.1.1</ecNumber>
    </recommendedName>
    <alternativeName>
        <fullName evidence="2">Maleate cis-trans isomerase</fullName>
    </alternativeName>
</protein>
<accession>O24766</accession>
<feature type="chain" id="PRO_0000418471" description="Maleate isomerase">
    <location>
        <begin position="1"/>
        <end position="253"/>
    </location>
</feature>
<feature type="active site" description="Nucleophile" evidence="1">
    <location>
        <position position="80"/>
    </location>
</feature>
<feature type="active site" description="Proton donor" evidence="1">
    <location>
        <position position="198"/>
    </location>
</feature>
<feature type="binding site" evidence="1">
    <location>
        <position position="14"/>
    </location>
    <ligand>
        <name>substrate</name>
    </ligand>
</feature>
<feature type="binding site" evidence="1">
    <location>
        <begin position="80"/>
        <end position="82"/>
    </location>
    <ligand>
        <name>substrate</name>
    </ligand>
</feature>
<feature type="binding site" evidence="1">
    <location>
        <position position="137"/>
    </location>
    <ligand>
        <name>substrate</name>
    </ligand>
</feature>
<feature type="binding site" evidence="1">
    <location>
        <position position="167"/>
    </location>
    <ligand>
        <name>substrate</name>
    </ligand>
</feature>
<feature type="binding site" evidence="1">
    <location>
        <begin position="199"/>
        <end position="200"/>
    </location>
    <ligand>
        <name>substrate</name>
    </ligand>
</feature>
<feature type="modified residue" description="S-(2-succinyl)cysteine" evidence="1">
    <location>
        <position position="80"/>
    </location>
</feature>
<feature type="mutagenesis site" description="Only slightly affects activity." evidence="3">
    <original>C</original>
    <variation>S</variation>
    <location>
        <position position="64"/>
    </location>
</feature>
<feature type="mutagenesis site" description="Loss of activity." evidence="3">
    <original>C</original>
    <variation>S</variation>
    <location>
        <position position="80"/>
    </location>
</feature>
<feature type="mutagenesis site" description="Loss of activity." evidence="3">
    <original>C</original>
    <variation>S</variation>
    <location>
        <position position="198"/>
    </location>
</feature>
<comment type="function">
    <text evidence="2 4">Catalyzes cis-trans isomerization of the C2-C3 double bond in maleate to yield fumarate.</text>
</comment>
<comment type="catalytic activity">
    <reaction evidence="2 4">
        <text>maleate = fumarate</text>
        <dbReference type="Rhea" id="RHEA:13169"/>
        <dbReference type="ChEBI" id="CHEBI:29806"/>
        <dbReference type="ChEBI" id="CHEBI:30780"/>
        <dbReference type="EC" id="5.2.1.1"/>
    </reaction>
</comment>
<comment type="biophysicochemical properties">
    <kinetics>
        <KM evidence="4">40 uM for maleate</KM>
    </kinetics>
</comment>
<comment type="subunit">
    <text evidence="4">Homodimer.</text>
</comment>
<comment type="miscellaneous">
    <text evidence="2">Reaction is initiated by nucleophilic attack of cysteine at the double bond, yielding a covalent succinylcysteine-like intermediate.</text>
</comment>
<comment type="similarity">
    <text evidence="2">Belongs to the maleate isomerase family.</text>
</comment>